<name>PSBL_METGY</name>
<gene>
    <name evidence="1" type="primary">psbL</name>
</gene>
<dbReference type="EMBL" id="AF469719">
    <property type="protein sequence ID" value="AAQ05246.1"/>
    <property type="molecule type" value="Genomic_DNA"/>
</dbReference>
<dbReference type="RefSeq" id="YP_009154372.1">
    <property type="nucleotide sequence ID" value="NC_027423.1"/>
</dbReference>
<dbReference type="SMR" id="Q71L58"/>
<dbReference type="GeneID" id="24707277"/>
<dbReference type="GO" id="GO:0009535">
    <property type="term" value="C:chloroplast thylakoid membrane"/>
    <property type="evidence" value="ECO:0007669"/>
    <property type="project" value="UniProtKB-SubCell"/>
</dbReference>
<dbReference type="GO" id="GO:0009539">
    <property type="term" value="C:photosystem II reaction center"/>
    <property type="evidence" value="ECO:0007669"/>
    <property type="project" value="InterPro"/>
</dbReference>
<dbReference type="GO" id="GO:0015979">
    <property type="term" value="P:photosynthesis"/>
    <property type="evidence" value="ECO:0007669"/>
    <property type="project" value="UniProtKB-UniRule"/>
</dbReference>
<dbReference type="HAMAP" id="MF_01317">
    <property type="entry name" value="PSII_PsbL"/>
    <property type="match status" value="1"/>
</dbReference>
<dbReference type="InterPro" id="IPR003372">
    <property type="entry name" value="PSII_PsbL"/>
</dbReference>
<dbReference type="InterPro" id="IPR037266">
    <property type="entry name" value="PSII_PsbL_sf"/>
</dbReference>
<dbReference type="NCBIfam" id="NF001972">
    <property type="entry name" value="PRK00753.1"/>
    <property type="match status" value="1"/>
</dbReference>
<dbReference type="Pfam" id="PF02419">
    <property type="entry name" value="PsbL"/>
    <property type="match status" value="1"/>
</dbReference>
<dbReference type="SUPFAM" id="SSF161017">
    <property type="entry name" value="Photosystem II reaction center protein L, PsbL"/>
    <property type="match status" value="1"/>
</dbReference>
<geneLocation type="chloroplast"/>
<protein>
    <recommendedName>
        <fullName evidence="1">Photosystem II reaction center protein L</fullName>
        <shortName evidence="1">PSII-L</shortName>
    </recommendedName>
</protein>
<accession>Q71L58</accession>
<keyword id="KW-0150">Chloroplast</keyword>
<keyword id="KW-0472">Membrane</keyword>
<keyword id="KW-0602">Photosynthesis</keyword>
<keyword id="KW-0604">Photosystem II</keyword>
<keyword id="KW-0934">Plastid</keyword>
<keyword id="KW-0674">Reaction center</keyword>
<keyword id="KW-0793">Thylakoid</keyword>
<keyword id="KW-0812">Transmembrane</keyword>
<keyword id="KW-1133">Transmembrane helix</keyword>
<proteinExistence type="inferred from homology"/>
<organism>
    <name type="scientific">Metasequoia glyptostroboides</name>
    <name type="common">Dawn redwood</name>
    <name type="synonym">Sequoia glyptostroboides</name>
    <dbReference type="NCBI Taxonomy" id="3371"/>
    <lineage>
        <taxon>Eukaryota</taxon>
        <taxon>Viridiplantae</taxon>
        <taxon>Streptophyta</taxon>
        <taxon>Embryophyta</taxon>
        <taxon>Tracheophyta</taxon>
        <taxon>Spermatophyta</taxon>
        <taxon>Pinopsida</taxon>
        <taxon>Pinidae</taxon>
        <taxon>Conifers II</taxon>
        <taxon>Cupressales</taxon>
        <taxon>Cupressaceae</taxon>
        <taxon>Metasequoia</taxon>
    </lineage>
</organism>
<evidence type="ECO:0000255" key="1">
    <source>
        <dbReference type="HAMAP-Rule" id="MF_01317"/>
    </source>
</evidence>
<comment type="function">
    <text evidence="1">One of the components of the core complex of photosystem II (PSII). PSII is a light-driven water:plastoquinone oxidoreductase that uses light energy to abstract electrons from H(2)O, generating O(2) and a proton gradient subsequently used for ATP formation. It consists of a core antenna complex that captures photons, and an electron transfer chain that converts photonic excitation into a charge separation. This subunit is found at the monomer-monomer interface and is required for correct PSII assembly and/or dimerization.</text>
</comment>
<comment type="subunit">
    <text evidence="1">PSII is composed of 1 copy each of membrane proteins PsbA, PsbB, PsbC, PsbD, PsbE, PsbF, PsbH, PsbI, PsbJ, PsbK, PsbL, PsbM, PsbT, PsbX, PsbY, PsbZ, Psb30/Ycf12, at least 3 peripheral proteins of the oxygen-evolving complex and a large number of cofactors. It forms dimeric complexes.</text>
</comment>
<comment type="subcellular location">
    <subcellularLocation>
        <location evidence="1">Plastid</location>
        <location evidence="1">Chloroplast thylakoid membrane</location>
        <topology evidence="1">Single-pass membrane protein</topology>
    </subcellularLocation>
</comment>
<comment type="similarity">
    <text evidence="1">Belongs to the PsbL family.</text>
</comment>
<feature type="chain" id="PRO_0000219743" description="Photosystem II reaction center protein L">
    <location>
        <begin position="1"/>
        <end position="38"/>
    </location>
</feature>
<feature type="transmembrane region" description="Helical" evidence="1">
    <location>
        <begin position="17"/>
        <end position="37"/>
    </location>
</feature>
<sequence length="38" mass="4497">MTQSNPNEQNVELNRTSLYWGLLLIFVLAVLFSNYFFN</sequence>
<reference key="1">
    <citation type="journal article" date="2003" name="Mol. Phylogenet. Evol.">
        <title>Inference of higher-order relationships in the cycads from a large chloroplast data set.</title>
        <authorList>
            <person name="Rai H.S."/>
            <person name="O'Brien H.E."/>
            <person name="Reeves P.A."/>
            <person name="Olmstead R.G."/>
            <person name="Graham S.W."/>
        </authorList>
    </citation>
    <scope>NUCLEOTIDE SEQUENCE [GENOMIC DNA]</scope>
</reference>